<proteinExistence type="evidence at protein level"/>
<reference key="1">
    <citation type="journal article" date="1994" name="Gene">
        <title>Cloning of the Dck gene encoding rat deoxycytidine kinase.</title>
        <authorList>
            <person name="Stegmann A.P."/>
            <person name="Honders M.W."/>
            <person name="Willemze R."/>
            <person name="Landegent J.E."/>
        </authorList>
    </citation>
    <scope>NUCLEOTIDE SEQUENCE [MRNA]</scope>
</reference>
<reference key="2">
    <citation type="journal article" date="2012" name="Nat. Commun.">
        <title>Quantitative maps of protein phosphorylation sites across 14 different rat organs and tissues.</title>
        <authorList>
            <person name="Lundby A."/>
            <person name="Secher A."/>
            <person name="Lage K."/>
            <person name="Nordsborg N.B."/>
            <person name="Dmytriyev A."/>
            <person name="Lundby C."/>
            <person name="Olsen J.V."/>
        </authorList>
    </citation>
    <scope>IDENTIFICATION BY MASS SPECTROMETRY [LARGE SCALE ANALYSIS]</scope>
</reference>
<evidence type="ECO:0000250" key="1"/>
<evidence type="ECO:0000250" key="2">
    <source>
        <dbReference type="UniProtKB" id="P27707"/>
    </source>
</evidence>
<evidence type="ECO:0000255" key="3"/>
<evidence type="ECO:0000305" key="4"/>
<protein>
    <recommendedName>
        <fullName>Deoxycytidine kinase</fullName>
        <shortName>dCK</shortName>
        <ecNumber evidence="2">2.7.1.74</ecNumber>
    </recommendedName>
    <alternativeName>
        <fullName>Deoxyadenosine kinase</fullName>
        <ecNumber evidence="2">2.7.1.76</ecNumber>
    </alternativeName>
    <alternativeName>
        <fullName>Deoxyguanosine kinase</fullName>
        <ecNumber evidence="2">2.7.1.113</ecNumber>
    </alternativeName>
</protein>
<sequence length="260" mass="30406">MATPPKRFCSSPSTSSEGTRIKKISIEGNIAAGKSTFVNILKQVCEDWEVVPEPVARWCNVQSTQDEFEELTTSQKSGGNVLQMMYEKPERWSFIFQSYACLSRIRAQLASLNGSLRDAEKPVLFFERSVYSDRYIFASNLYESDCMNETEWTIYQDWHDWMNSQFGQSLELDGIIYLRATPEKCLNRIYIRGRDEEQGIPLEYLEKLHYKHESWLLHRTLKTNFEYLQEVPILTLDVNLDFKDKEESLVEKVKEFLSTT</sequence>
<name>DCK_RAT</name>
<dbReference type="EC" id="2.7.1.74" evidence="2"/>
<dbReference type="EC" id="2.7.1.76" evidence="2"/>
<dbReference type="EC" id="2.7.1.113" evidence="2"/>
<dbReference type="EMBL" id="L33894">
    <property type="protein sequence ID" value="AAA65098.1"/>
    <property type="molecule type" value="mRNA"/>
</dbReference>
<dbReference type="RefSeq" id="NP_077072.1">
    <property type="nucleotide sequence ID" value="NM_024158.1"/>
</dbReference>
<dbReference type="SMR" id="P48769"/>
<dbReference type="FunCoup" id="P48769">
    <property type="interactions" value="700"/>
</dbReference>
<dbReference type="STRING" id="10116.ENSRNOP00000004440"/>
<dbReference type="ChEMBL" id="CHEMBL3271929"/>
<dbReference type="iPTMnet" id="P48769"/>
<dbReference type="PhosphoSitePlus" id="P48769"/>
<dbReference type="PaxDb" id="10116-ENSRNOP00000004440"/>
<dbReference type="GeneID" id="79127"/>
<dbReference type="KEGG" id="rno:79127"/>
<dbReference type="UCSC" id="RGD:620667">
    <property type="organism name" value="rat"/>
</dbReference>
<dbReference type="AGR" id="RGD:620667"/>
<dbReference type="CTD" id="1633"/>
<dbReference type="RGD" id="620667">
    <property type="gene designation" value="Dck"/>
</dbReference>
<dbReference type="eggNOG" id="KOG4235">
    <property type="taxonomic scope" value="Eukaryota"/>
</dbReference>
<dbReference type="InParanoid" id="P48769"/>
<dbReference type="PhylomeDB" id="P48769"/>
<dbReference type="Reactome" id="R-RNO-73614">
    <property type="pathway name" value="Pyrimidine salvage"/>
</dbReference>
<dbReference type="Reactome" id="R-RNO-74217">
    <property type="pathway name" value="Purine salvage"/>
</dbReference>
<dbReference type="SABIO-RK" id="P48769"/>
<dbReference type="PRO" id="PR:P48769"/>
<dbReference type="Proteomes" id="UP000002494">
    <property type="component" value="Unplaced"/>
</dbReference>
<dbReference type="GO" id="GO:0005737">
    <property type="term" value="C:cytoplasm"/>
    <property type="evidence" value="ECO:0000318"/>
    <property type="project" value="GO_Central"/>
</dbReference>
<dbReference type="GO" id="GO:0005739">
    <property type="term" value="C:mitochondrion"/>
    <property type="evidence" value="ECO:0000318"/>
    <property type="project" value="GO_Central"/>
</dbReference>
<dbReference type="GO" id="GO:0005634">
    <property type="term" value="C:nucleus"/>
    <property type="evidence" value="ECO:0007669"/>
    <property type="project" value="UniProtKB-SubCell"/>
</dbReference>
<dbReference type="GO" id="GO:0005524">
    <property type="term" value="F:ATP binding"/>
    <property type="evidence" value="ECO:0000314"/>
    <property type="project" value="RGD"/>
</dbReference>
<dbReference type="GO" id="GO:0043771">
    <property type="term" value="F:cytidine kinase activity"/>
    <property type="evidence" value="ECO:0000266"/>
    <property type="project" value="RGD"/>
</dbReference>
<dbReference type="GO" id="GO:0004136">
    <property type="term" value="F:deoxyadenosine kinase activity"/>
    <property type="evidence" value="ECO:0000266"/>
    <property type="project" value="RGD"/>
</dbReference>
<dbReference type="GO" id="GO:0004137">
    <property type="term" value="F:deoxycytidine kinase activity"/>
    <property type="evidence" value="ECO:0000314"/>
    <property type="project" value="RGD"/>
</dbReference>
<dbReference type="GO" id="GO:0004138">
    <property type="term" value="F:deoxyguanosine kinase activity"/>
    <property type="evidence" value="ECO:0000266"/>
    <property type="project" value="RGD"/>
</dbReference>
<dbReference type="GO" id="GO:0032546">
    <property type="term" value="F:deoxyribonucleoside binding"/>
    <property type="evidence" value="ECO:0000353"/>
    <property type="project" value="RGD"/>
</dbReference>
<dbReference type="GO" id="GO:0000287">
    <property type="term" value="F:magnesium ion binding"/>
    <property type="evidence" value="ECO:0000314"/>
    <property type="project" value="RGD"/>
</dbReference>
<dbReference type="GO" id="GO:0042803">
    <property type="term" value="F:protein homodimerization activity"/>
    <property type="evidence" value="ECO:0000266"/>
    <property type="project" value="RGD"/>
</dbReference>
<dbReference type="GO" id="GO:0032548">
    <property type="term" value="F:pyrimidine deoxyribonucleoside binding"/>
    <property type="evidence" value="ECO:0000314"/>
    <property type="project" value="RGD"/>
</dbReference>
<dbReference type="GO" id="GO:0106383">
    <property type="term" value="P:dAMP salvage"/>
    <property type="evidence" value="ECO:0000266"/>
    <property type="project" value="RGD"/>
</dbReference>
<dbReference type="GO" id="GO:0046092">
    <property type="term" value="P:deoxycytidine metabolic process"/>
    <property type="evidence" value="ECO:0000314"/>
    <property type="project" value="RGD"/>
</dbReference>
<dbReference type="GO" id="GO:1901293">
    <property type="term" value="P:nucleoside phosphate biosynthetic process"/>
    <property type="evidence" value="ECO:0000266"/>
    <property type="project" value="RGD"/>
</dbReference>
<dbReference type="GO" id="GO:0006220">
    <property type="term" value="P:pyrimidine nucleotide metabolic process"/>
    <property type="evidence" value="ECO:0000250"/>
    <property type="project" value="UniProtKB"/>
</dbReference>
<dbReference type="CDD" id="cd01673">
    <property type="entry name" value="dNK"/>
    <property type="match status" value="1"/>
</dbReference>
<dbReference type="FunFam" id="3.40.50.300:FF:000461">
    <property type="entry name" value="Deoxycytidine kinase"/>
    <property type="match status" value="1"/>
</dbReference>
<dbReference type="Gene3D" id="3.40.50.300">
    <property type="entry name" value="P-loop containing nucleotide triphosphate hydrolases"/>
    <property type="match status" value="1"/>
</dbReference>
<dbReference type="InterPro" id="IPR002624">
    <property type="entry name" value="DCK/DGK"/>
</dbReference>
<dbReference type="InterPro" id="IPR050566">
    <property type="entry name" value="Deoxyribonucleoside_kinase"/>
</dbReference>
<dbReference type="InterPro" id="IPR031314">
    <property type="entry name" value="DNK_dom"/>
</dbReference>
<dbReference type="InterPro" id="IPR027417">
    <property type="entry name" value="P-loop_NTPase"/>
</dbReference>
<dbReference type="PANTHER" id="PTHR10513:SF19">
    <property type="entry name" value="DEOXYCYTIDINE KINASE"/>
    <property type="match status" value="1"/>
</dbReference>
<dbReference type="PANTHER" id="PTHR10513">
    <property type="entry name" value="DEOXYNUCLEOSIDE KINASE"/>
    <property type="match status" value="1"/>
</dbReference>
<dbReference type="Pfam" id="PF01712">
    <property type="entry name" value="dNK"/>
    <property type="match status" value="1"/>
</dbReference>
<dbReference type="PIRSF" id="PIRSF000705">
    <property type="entry name" value="DNK"/>
    <property type="match status" value="1"/>
</dbReference>
<dbReference type="SUPFAM" id="SSF52540">
    <property type="entry name" value="P-loop containing nucleoside triphosphate hydrolases"/>
    <property type="match status" value="1"/>
</dbReference>
<gene>
    <name type="primary">Dck</name>
</gene>
<organism>
    <name type="scientific">Rattus norvegicus</name>
    <name type="common">Rat</name>
    <dbReference type="NCBI Taxonomy" id="10116"/>
    <lineage>
        <taxon>Eukaryota</taxon>
        <taxon>Metazoa</taxon>
        <taxon>Chordata</taxon>
        <taxon>Craniata</taxon>
        <taxon>Vertebrata</taxon>
        <taxon>Euteleostomi</taxon>
        <taxon>Mammalia</taxon>
        <taxon>Eutheria</taxon>
        <taxon>Euarchontoglires</taxon>
        <taxon>Glires</taxon>
        <taxon>Rodentia</taxon>
        <taxon>Myomorpha</taxon>
        <taxon>Muroidea</taxon>
        <taxon>Muridae</taxon>
        <taxon>Murinae</taxon>
        <taxon>Rattus</taxon>
    </lineage>
</organism>
<accession>P48769</accession>
<feature type="chain" id="PRO_0000175092" description="Deoxycytidine kinase">
    <location>
        <begin position="1"/>
        <end position="260"/>
    </location>
</feature>
<feature type="active site" description="Proton acceptor" evidence="3">
    <location>
        <position position="127"/>
    </location>
</feature>
<feature type="binding site" evidence="1">
    <location>
        <begin position="28"/>
        <end position="36"/>
    </location>
    <ligand>
        <name>ATP</name>
        <dbReference type="ChEBI" id="CHEBI:30616"/>
    </ligand>
</feature>
<feature type="binding site" evidence="1">
    <location>
        <position position="53"/>
    </location>
    <ligand>
        <name>substrate</name>
    </ligand>
</feature>
<feature type="binding site" evidence="1">
    <location>
        <position position="86"/>
    </location>
    <ligand>
        <name>substrate</name>
    </ligand>
</feature>
<feature type="binding site" evidence="1">
    <location>
        <position position="97"/>
    </location>
    <ligand>
        <name>substrate</name>
    </ligand>
</feature>
<feature type="binding site" evidence="1">
    <location>
        <position position="128"/>
    </location>
    <ligand>
        <name>substrate</name>
    </ligand>
</feature>
<feature type="binding site" evidence="1">
    <location>
        <position position="133"/>
    </location>
    <ligand>
        <name>substrate</name>
    </ligand>
</feature>
<feature type="binding site" evidence="1">
    <location>
        <begin position="188"/>
        <end position="192"/>
    </location>
    <ligand>
        <name>ATP</name>
        <dbReference type="ChEBI" id="CHEBI:30616"/>
    </ligand>
</feature>
<feature type="binding site" evidence="1">
    <location>
        <position position="197"/>
    </location>
    <ligand>
        <name>substrate</name>
    </ligand>
</feature>
<feature type="binding site" evidence="1">
    <location>
        <begin position="240"/>
        <end position="242"/>
    </location>
    <ligand>
        <name>ATP</name>
        <dbReference type="ChEBI" id="CHEBI:30616"/>
    </ligand>
</feature>
<feature type="modified residue" description="Phosphoserine; by CK1" evidence="2">
    <location>
        <position position="11"/>
    </location>
</feature>
<feature type="modified residue" description="Phosphoserine; by CK1" evidence="2">
    <location>
        <position position="15"/>
    </location>
</feature>
<feature type="modified residue" description="Phosphothreonine; by CK1" evidence="2">
    <location>
        <position position="72"/>
    </location>
</feature>
<feature type="modified residue" description="Phosphoserine; by CK1" evidence="2">
    <location>
        <position position="74"/>
    </location>
</feature>
<comment type="function">
    <text evidence="2">Phosphorylates the deoxyribonucleosides deoxycytidine, deoxyguanosine and deoxyadenosine.</text>
</comment>
<comment type="catalytic activity">
    <reaction evidence="2">
        <text>2'-deoxycytidine + a ribonucleoside 5'-triphosphate = dCMP + a ribonucleoside 5'-diphosphate + H(+)</text>
        <dbReference type="Rhea" id="RHEA:20061"/>
        <dbReference type="ChEBI" id="CHEBI:15378"/>
        <dbReference type="ChEBI" id="CHEBI:15698"/>
        <dbReference type="ChEBI" id="CHEBI:57566"/>
        <dbReference type="ChEBI" id="CHEBI:57930"/>
        <dbReference type="ChEBI" id="CHEBI:61557"/>
        <dbReference type="EC" id="2.7.1.74"/>
    </reaction>
</comment>
<comment type="catalytic activity">
    <reaction evidence="2">
        <text>2'-deoxyadenosine + ATP = dAMP + ADP + H(+)</text>
        <dbReference type="Rhea" id="RHEA:23452"/>
        <dbReference type="ChEBI" id="CHEBI:15378"/>
        <dbReference type="ChEBI" id="CHEBI:17256"/>
        <dbReference type="ChEBI" id="CHEBI:30616"/>
        <dbReference type="ChEBI" id="CHEBI:58245"/>
        <dbReference type="ChEBI" id="CHEBI:456216"/>
        <dbReference type="EC" id="2.7.1.76"/>
    </reaction>
</comment>
<comment type="catalytic activity">
    <reaction evidence="2">
        <text>2'-deoxyguanosine + ATP = dGMP + ADP + H(+)</text>
        <dbReference type="Rhea" id="RHEA:19201"/>
        <dbReference type="ChEBI" id="CHEBI:15378"/>
        <dbReference type="ChEBI" id="CHEBI:17172"/>
        <dbReference type="ChEBI" id="CHEBI:30616"/>
        <dbReference type="ChEBI" id="CHEBI:57673"/>
        <dbReference type="ChEBI" id="CHEBI:456216"/>
        <dbReference type="EC" id="2.7.1.113"/>
    </reaction>
</comment>
<comment type="subunit">
    <text evidence="2">Homodimer.</text>
</comment>
<comment type="subcellular location">
    <subcellularLocation>
        <location evidence="2">Nucleus</location>
    </subcellularLocation>
</comment>
<comment type="PTM">
    <text evidence="2">Phosphorylated and activated in vitro upon phosphorylation at Ser-74 by CSNK1D/CK1.</text>
</comment>
<comment type="similarity">
    <text evidence="4">Belongs to the DCK/DGK family.</text>
</comment>
<keyword id="KW-0067">ATP-binding</keyword>
<keyword id="KW-0418">Kinase</keyword>
<keyword id="KW-0547">Nucleotide-binding</keyword>
<keyword id="KW-0539">Nucleus</keyword>
<keyword id="KW-0597">Phosphoprotein</keyword>
<keyword id="KW-1185">Reference proteome</keyword>
<keyword id="KW-0808">Transferase</keyword>